<protein>
    <recommendedName>
        <fullName evidence="1">2-dehydro-3-deoxyphosphooctonate aldolase</fullName>
        <ecNumber evidence="1">2.5.1.55</ecNumber>
    </recommendedName>
    <alternativeName>
        <fullName evidence="1">3-deoxy-D-manno-octulosonic acid 8-phosphate synthase</fullName>
    </alternativeName>
    <alternativeName>
        <fullName evidence="1">KDO-8-phosphate synthase</fullName>
        <shortName evidence="1">KDO 8-P synthase</shortName>
        <shortName evidence="1">KDOPS</shortName>
    </alternativeName>
    <alternativeName>
        <fullName evidence="1">Phospho-2-dehydro-3-deoxyoctonate aldolase</fullName>
    </alternativeName>
</protein>
<dbReference type="EC" id="2.5.1.55" evidence="1"/>
<dbReference type="EMBL" id="AE016823">
    <property type="protein sequence ID" value="AAS70137.1"/>
    <property type="status" value="ALT_INIT"/>
    <property type="molecule type" value="Genomic_DNA"/>
</dbReference>
<dbReference type="SMR" id="P61656"/>
<dbReference type="KEGG" id="lic:LIC_11541"/>
<dbReference type="HOGENOM" id="CLU_036666_0_0_12"/>
<dbReference type="UniPathway" id="UPA00030"/>
<dbReference type="UniPathway" id="UPA00357">
    <property type="reaction ID" value="UER00474"/>
</dbReference>
<dbReference type="Proteomes" id="UP000007037">
    <property type="component" value="Chromosome I"/>
</dbReference>
<dbReference type="GO" id="GO:0005737">
    <property type="term" value="C:cytoplasm"/>
    <property type="evidence" value="ECO:0007669"/>
    <property type="project" value="UniProtKB-SubCell"/>
</dbReference>
<dbReference type="GO" id="GO:0008676">
    <property type="term" value="F:3-deoxy-8-phosphooctulonate synthase activity"/>
    <property type="evidence" value="ECO:0007669"/>
    <property type="project" value="UniProtKB-UniRule"/>
</dbReference>
<dbReference type="GO" id="GO:0019294">
    <property type="term" value="P:keto-3-deoxy-D-manno-octulosonic acid biosynthetic process"/>
    <property type="evidence" value="ECO:0007669"/>
    <property type="project" value="UniProtKB-UniRule"/>
</dbReference>
<dbReference type="Gene3D" id="3.20.20.70">
    <property type="entry name" value="Aldolase class I"/>
    <property type="match status" value="1"/>
</dbReference>
<dbReference type="HAMAP" id="MF_00056">
    <property type="entry name" value="KDO8P_synth"/>
    <property type="match status" value="1"/>
</dbReference>
<dbReference type="InterPro" id="IPR013785">
    <property type="entry name" value="Aldolase_TIM"/>
</dbReference>
<dbReference type="InterPro" id="IPR006218">
    <property type="entry name" value="DAHP1/KDSA"/>
</dbReference>
<dbReference type="InterPro" id="IPR006269">
    <property type="entry name" value="KDO8P_synthase"/>
</dbReference>
<dbReference type="NCBIfam" id="TIGR01362">
    <property type="entry name" value="KDO8P_synth"/>
    <property type="match status" value="1"/>
</dbReference>
<dbReference type="NCBIfam" id="NF003543">
    <property type="entry name" value="PRK05198.1"/>
    <property type="match status" value="1"/>
</dbReference>
<dbReference type="PANTHER" id="PTHR21057">
    <property type="entry name" value="PHOSPHO-2-DEHYDRO-3-DEOXYHEPTONATE ALDOLASE"/>
    <property type="match status" value="1"/>
</dbReference>
<dbReference type="Pfam" id="PF00793">
    <property type="entry name" value="DAHP_synth_1"/>
    <property type="match status" value="1"/>
</dbReference>
<dbReference type="SUPFAM" id="SSF51569">
    <property type="entry name" value="Aldolase"/>
    <property type="match status" value="1"/>
</dbReference>
<feature type="chain" id="PRO_0000187138" description="2-dehydro-3-deoxyphosphooctonate aldolase">
    <location>
        <begin position="1"/>
        <end position="287"/>
    </location>
</feature>
<gene>
    <name evidence="1" type="primary">kdsA</name>
    <name type="ordered locus">LIC_11541</name>
</gene>
<keyword id="KW-0963">Cytoplasm</keyword>
<keyword id="KW-0448">Lipopolysaccharide biosynthesis</keyword>
<keyword id="KW-0808">Transferase</keyword>
<organism>
    <name type="scientific">Leptospira interrogans serogroup Icterohaemorrhagiae serovar copenhageni (strain Fiocruz L1-130)</name>
    <dbReference type="NCBI Taxonomy" id="267671"/>
    <lineage>
        <taxon>Bacteria</taxon>
        <taxon>Pseudomonadati</taxon>
        <taxon>Spirochaetota</taxon>
        <taxon>Spirochaetia</taxon>
        <taxon>Leptospirales</taxon>
        <taxon>Leptospiraceae</taxon>
        <taxon>Leptospira</taxon>
    </lineage>
</organism>
<accession>P61656</accession>
<comment type="catalytic activity">
    <reaction evidence="1">
        <text>D-arabinose 5-phosphate + phosphoenolpyruvate + H2O = 3-deoxy-alpha-D-manno-2-octulosonate-8-phosphate + phosphate</text>
        <dbReference type="Rhea" id="RHEA:14053"/>
        <dbReference type="ChEBI" id="CHEBI:15377"/>
        <dbReference type="ChEBI" id="CHEBI:43474"/>
        <dbReference type="ChEBI" id="CHEBI:57693"/>
        <dbReference type="ChEBI" id="CHEBI:58702"/>
        <dbReference type="ChEBI" id="CHEBI:85985"/>
        <dbReference type="EC" id="2.5.1.55"/>
    </reaction>
</comment>
<comment type="pathway">
    <text evidence="1">Carbohydrate biosynthesis; 3-deoxy-D-manno-octulosonate biosynthesis; 3-deoxy-D-manno-octulosonate from D-ribulose 5-phosphate: step 2/3.</text>
</comment>
<comment type="pathway">
    <text evidence="1">Bacterial outer membrane biogenesis; lipopolysaccharide biosynthesis.</text>
</comment>
<comment type="subcellular location">
    <subcellularLocation>
        <location evidence="1">Cytoplasm</location>
    </subcellularLocation>
</comment>
<comment type="similarity">
    <text evidence="1">Belongs to the KdsA family.</text>
</comment>
<comment type="sequence caution" evidence="2">
    <conflict type="erroneous initiation">
        <sequence resource="EMBL-CDS" id="AAS70137"/>
    </conflict>
    <text>Extended N-terminus.</text>
</comment>
<reference key="1">
    <citation type="journal article" date="2004" name="J. Bacteriol.">
        <title>Comparative genomics of two Leptospira interrogans serovars reveals novel insights into physiology and pathogenesis.</title>
        <authorList>
            <person name="Nascimento A.L.T.O."/>
            <person name="Ko A.I."/>
            <person name="Martins E.A.L."/>
            <person name="Monteiro-Vitorello C.B."/>
            <person name="Ho P.L."/>
            <person name="Haake D.A."/>
            <person name="Verjovski-Almeida S."/>
            <person name="Hartskeerl R.A."/>
            <person name="Marques M.V."/>
            <person name="Oliveira M.C."/>
            <person name="Menck C.F.M."/>
            <person name="Leite L.C.C."/>
            <person name="Carrer H."/>
            <person name="Coutinho L.L."/>
            <person name="Degrave W.M."/>
            <person name="Dellagostin O.A."/>
            <person name="El-Dorry H."/>
            <person name="Ferro E.S."/>
            <person name="Ferro M.I.T."/>
            <person name="Furlan L.R."/>
            <person name="Gamberini M."/>
            <person name="Giglioti E.A."/>
            <person name="Goes-Neto A."/>
            <person name="Goldman G.H."/>
            <person name="Goldman M.H.S."/>
            <person name="Harakava R."/>
            <person name="Jeronimo S.M.B."/>
            <person name="Junqueira-de-Azevedo I.L.M."/>
            <person name="Kimura E.T."/>
            <person name="Kuramae E.E."/>
            <person name="Lemos E.G.M."/>
            <person name="Lemos M.V.F."/>
            <person name="Marino C.L."/>
            <person name="Nunes L.R."/>
            <person name="de Oliveira R.C."/>
            <person name="Pereira G.G."/>
            <person name="Reis M.S."/>
            <person name="Schriefer A."/>
            <person name="Siqueira W.J."/>
            <person name="Sommer P."/>
            <person name="Tsai S.M."/>
            <person name="Simpson A.J.G."/>
            <person name="Ferro J.A."/>
            <person name="Camargo L.E.A."/>
            <person name="Kitajima J.P."/>
            <person name="Setubal J.C."/>
            <person name="Van Sluys M.A."/>
        </authorList>
    </citation>
    <scope>NUCLEOTIDE SEQUENCE [LARGE SCALE GENOMIC DNA]</scope>
    <source>
        <strain>Fiocruz L1-130</strain>
    </source>
</reference>
<proteinExistence type="inferred from homology"/>
<name>KDSA_LEPIC</name>
<evidence type="ECO:0000255" key="1">
    <source>
        <dbReference type="HAMAP-Rule" id="MF_00056"/>
    </source>
</evidence>
<evidence type="ECO:0000305" key="2"/>
<sequence>MKDNTCTKRDFLNGTKIGGDEPFFLISGPCVMENRDLLDRVCAEMIEVCGELKIPYIFKSSFDKANRSSVNSYRGPGLAEGIKNLEYIKNKYNVPVLTDIHETSQISPLKDVIDVYQIPAFLCRQTDLISQSAQTGKWVNVKKGQFLAPADTRHIAVKMNESGNNKLLVTERGTSFGYGNLIFDGRAIPIIHGFDIPLVFDATHSAQLPGAAGNSTGGQREFIPSILRSAVSFGIEGIFMEVHPDPPNALSDATTQYPLSQIKSLLKEMIGLDRYIKKEILISRSSL</sequence>